<sequence length="433" mass="46912">MSIITDIYAREVLDSRGNPTLEVEVYTEDGAFGRGMVPSGASTGEHEAVELRDGDKSRYNGLGTQKAVDNVNNIIAEAIIGYEVTDQQAIDRAMIALDGTENKGKLGANAILGVSIAAARAAADELGVPLYNYLGGFNAKVLPTPMMNIINGGSHSDAPIAFQEFMIVPVGAPTFKEALRWGAEIFHALKKILKARGLETAVGDEGGFAPKFDGTEDGVETILKAIEAAGYKAGEDGVMIGFDCASSEFYENGVYDYTKFEGEGGKKLSASEQVDYLEELVSKYPIITIEDGMDENDWDGWKILTERLGKKVQLVGDDFFVTNTKYLERGIRENASNAILIKVNQIGTLTETFEAIEMAKEAGFTAIVSHRSGETEDSTISDIAVATNAGQIKTGSLSRTDRMAKYNQLLRIEDQLAEVAQYKGLKAFYNLKK</sequence>
<proteinExistence type="inferred from homology"/>
<comment type="function">
    <text evidence="1">Catalyzes the reversible conversion of 2-phosphoglycerate (2-PG) into phosphoenolpyruvate (PEP). It is essential for the degradation of carbohydrates via glycolysis.</text>
</comment>
<comment type="catalytic activity">
    <reaction evidence="1">
        <text>(2R)-2-phosphoglycerate = phosphoenolpyruvate + H2O</text>
        <dbReference type="Rhea" id="RHEA:10164"/>
        <dbReference type="ChEBI" id="CHEBI:15377"/>
        <dbReference type="ChEBI" id="CHEBI:58289"/>
        <dbReference type="ChEBI" id="CHEBI:58702"/>
        <dbReference type="EC" id="4.2.1.11"/>
    </reaction>
</comment>
<comment type="cofactor">
    <cofactor evidence="1">
        <name>Mg(2+)</name>
        <dbReference type="ChEBI" id="CHEBI:18420"/>
    </cofactor>
    <text evidence="1">Binds a second Mg(2+) ion via substrate during catalysis.</text>
</comment>
<comment type="pathway">
    <text evidence="1">Carbohydrate degradation; glycolysis; pyruvate from D-glyceraldehyde 3-phosphate: step 4/5.</text>
</comment>
<comment type="subcellular location">
    <subcellularLocation>
        <location evidence="1">Cytoplasm</location>
    </subcellularLocation>
    <subcellularLocation>
        <location evidence="1">Secreted</location>
    </subcellularLocation>
    <subcellularLocation>
        <location evidence="1">Cell surface</location>
    </subcellularLocation>
    <text evidence="1">Fractions of enolase are present in both the cytoplasm and on the cell surface.</text>
</comment>
<comment type="similarity">
    <text evidence="1">Belongs to the enolase family.</text>
</comment>
<accession>Q030Y9</accession>
<keyword id="KW-0963">Cytoplasm</keyword>
<keyword id="KW-0324">Glycolysis</keyword>
<keyword id="KW-0456">Lyase</keyword>
<keyword id="KW-0460">Magnesium</keyword>
<keyword id="KW-0479">Metal-binding</keyword>
<keyword id="KW-0964">Secreted</keyword>
<feature type="chain" id="PRO_0000280858" description="Enolase 2">
    <location>
        <begin position="1"/>
        <end position="433"/>
    </location>
</feature>
<feature type="region of interest" description="Disordered" evidence="2">
    <location>
        <begin position="34"/>
        <end position="56"/>
    </location>
</feature>
<feature type="compositionally biased region" description="Basic and acidic residues" evidence="2">
    <location>
        <begin position="44"/>
        <end position="56"/>
    </location>
</feature>
<feature type="active site" description="Proton donor" evidence="1">
    <location>
        <position position="205"/>
    </location>
</feature>
<feature type="active site" description="Proton acceptor" evidence="1">
    <location>
        <position position="342"/>
    </location>
</feature>
<feature type="binding site" evidence="1">
    <location>
        <position position="163"/>
    </location>
    <ligand>
        <name>(2R)-2-phosphoglycerate</name>
        <dbReference type="ChEBI" id="CHEBI:58289"/>
    </ligand>
</feature>
<feature type="binding site" evidence="1">
    <location>
        <position position="243"/>
    </location>
    <ligand>
        <name>Mg(2+)</name>
        <dbReference type="ChEBI" id="CHEBI:18420"/>
    </ligand>
</feature>
<feature type="binding site" evidence="1">
    <location>
        <position position="290"/>
    </location>
    <ligand>
        <name>Mg(2+)</name>
        <dbReference type="ChEBI" id="CHEBI:18420"/>
    </ligand>
</feature>
<feature type="binding site" evidence="1">
    <location>
        <position position="317"/>
    </location>
    <ligand>
        <name>Mg(2+)</name>
        <dbReference type="ChEBI" id="CHEBI:18420"/>
    </ligand>
</feature>
<feature type="binding site" evidence="1">
    <location>
        <position position="342"/>
    </location>
    <ligand>
        <name>(2R)-2-phosphoglycerate</name>
        <dbReference type="ChEBI" id="CHEBI:58289"/>
    </ligand>
</feature>
<feature type="binding site" evidence="1">
    <location>
        <position position="371"/>
    </location>
    <ligand>
        <name>(2R)-2-phosphoglycerate</name>
        <dbReference type="ChEBI" id="CHEBI:58289"/>
    </ligand>
</feature>
<feature type="binding site" evidence="1">
    <location>
        <position position="372"/>
    </location>
    <ligand>
        <name>(2R)-2-phosphoglycerate</name>
        <dbReference type="ChEBI" id="CHEBI:58289"/>
    </ligand>
</feature>
<feature type="binding site" evidence="1">
    <location>
        <position position="393"/>
    </location>
    <ligand>
        <name>(2R)-2-phosphoglycerate</name>
        <dbReference type="ChEBI" id="CHEBI:58289"/>
    </ligand>
</feature>
<evidence type="ECO:0000255" key="1">
    <source>
        <dbReference type="HAMAP-Rule" id="MF_00318"/>
    </source>
</evidence>
<evidence type="ECO:0000256" key="2">
    <source>
        <dbReference type="SAM" id="MobiDB-lite"/>
    </source>
</evidence>
<name>ENO2_LACLS</name>
<gene>
    <name evidence="1" type="primary">eno2</name>
    <name type="ordered locus">LACR_0668</name>
</gene>
<protein>
    <recommendedName>
        <fullName evidence="1">Enolase 2</fullName>
        <ecNumber evidence="1">4.2.1.11</ecNumber>
    </recommendedName>
    <alternativeName>
        <fullName evidence="1">2-phospho-D-glycerate hydro-lyase 2</fullName>
    </alternativeName>
    <alternativeName>
        <fullName evidence="1">2-phosphoglycerate dehydratase 2</fullName>
    </alternativeName>
</protein>
<dbReference type="EC" id="4.2.1.11" evidence="1"/>
<dbReference type="EMBL" id="CP000425">
    <property type="protein sequence ID" value="ABJ72233.1"/>
    <property type="molecule type" value="Genomic_DNA"/>
</dbReference>
<dbReference type="SMR" id="Q030Y9"/>
<dbReference type="KEGG" id="llc:LACR_0668"/>
<dbReference type="HOGENOM" id="CLU_031223_2_1_9"/>
<dbReference type="UniPathway" id="UPA00109">
    <property type="reaction ID" value="UER00187"/>
</dbReference>
<dbReference type="Proteomes" id="UP000000240">
    <property type="component" value="Chromosome"/>
</dbReference>
<dbReference type="GO" id="GO:0009986">
    <property type="term" value="C:cell surface"/>
    <property type="evidence" value="ECO:0007669"/>
    <property type="project" value="UniProtKB-SubCell"/>
</dbReference>
<dbReference type="GO" id="GO:0005576">
    <property type="term" value="C:extracellular region"/>
    <property type="evidence" value="ECO:0007669"/>
    <property type="project" value="UniProtKB-SubCell"/>
</dbReference>
<dbReference type="GO" id="GO:0009274">
    <property type="term" value="C:peptidoglycan-based cell wall"/>
    <property type="evidence" value="ECO:0007669"/>
    <property type="project" value="UniProtKB-ARBA"/>
</dbReference>
<dbReference type="GO" id="GO:0000015">
    <property type="term" value="C:phosphopyruvate hydratase complex"/>
    <property type="evidence" value="ECO:0007669"/>
    <property type="project" value="InterPro"/>
</dbReference>
<dbReference type="GO" id="GO:0000287">
    <property type="term" value="F:magnesium ion binding"/>
    <property type="evidence" value="ECO:0007669"/>
    <property type="project" value="UniProtKB-UniRule"/>
</dbReference>
<dbReference type="GO" id="GO:0004634">
    <property type="term" value="F:phosphopyruvate hydratase activity"/>
    <property type="evidence" value="ECO:0007669"/>
    <property type="project" value="UniProtKB-UniRule"/>
</dbReference>
<dbReference type="GO" id="GO:0006096">
    <property type="term" value="P:glycolytic process"/>
    <property type="evidence" value="ECO:0007669"/>
    <property type="project" value="UniProtKB-UniRule"/>
</dbReference>
<dbReference type="CDD" id="cd03313">
    <property type="entry name" value="enolase"/>
    <property type="match status" value="1"/>
</dbReference>
<dbReference type="FunFam" id="3.20.20.120:FF:000001">
    <property type="entry name" value="Enolase"/>
    <property type="match status" value="1"/>
</dbReference>
<dbReference type="FunFam" id="3.30.390.10:FF:000001">
    <property type="entry name" value="Enolase"/>
    <property type="match status" value="1"/>
</dbReference>
<dbReference type="Gene3D" id="3.20.20.120">
    <property type="entry name" value="Enolase-like C-terminal domain"/>
    <property type="match status" value="1"/>
</dbReference>
<dbReference type="Gene3D" id="3.30.390.10">
    <property type="entry name" value="Enolase-like, N-terminal domain"/>
    <property type="match status" value="1"/>
</dbReference>
<dbReference type="HAMAP" id="MF_00318">
    <property type="entry name" value="Enolase"/>
    <property type="match status" value="1"/>
</dbReference>
<dbReference type="InterPro" id="IPR000941">
    <property type="entry name" value="Enolase"/>
</dbReference>
<dbReference type="InterPro" id="IPR036849">
    <property type="entry name" value="Enolase-like_C_sf"/>
</dbReference>
<dbReference type="InterPro" id="IPR029017">
    <property type="entry name" value="Enolase-like_N"/>
</dbReference>
<dbReference type="InterPro" id="IPR020810">
    <property type="entry name" value="Enolase_C"/>
</dbReference>
<dbReference type="InterPro" id="IPR020809">
    <property type="entry name" value="Enolase_CS"/>
</dbReference>
<dbReference type="InterPro" id="IPR020811">
    <property type="entry name" value="Enolase_N"/>
</dbReference>
<dbReference type="NCBIfam" id="TIGR01060">
    <property type="entry name" value="eno"/>
    <property type="match status" value="1"/>
</dbReference>
<dbReference type="PANTHER" id="PTHR11902">
    <property type="entry name" value="ENOLASE"/>
    <property type="match status" value="1"/>
</dbReference>
<dbReference type="PANTHER" id="PTHR11902:SF1">
    <property type="entry name" value="ENOLASE"/>
    <property type="match status" value="1"/>
</dbReference>
<dbReference type="Pfam" id="PF00113">
    <property type="entry name" value="Enolase_C"/>
    <property type="match status" value="1"/>
</dbReference>
<dbReference type="Pfam" id="PF03952">
    <property type="entry name" value="Enolase_N"/>
    <property type="match status" value="1"/>
</dbReference>
<dbReference type="PIRSF" id="PIRSF001400">
    <property type="entry name" value="Enolase"/>
    <property type="match status" value="1"/>
</dbReference>
<dbReference type="PRINTS" id="PR00148">
    <property type="entry name" value="ENOLASE"/>
</dbReference>
<dbReference type="SFLD" id="SFLDS00001">
    <property type="entry name" value="Enolase"/>
    <property type="match status" value="1"/>
</dbReference>
<dbReference type="SFLD" id="SFLDF00002">
    <property type="entry name" value="enolase"/>
    <property type="match status" value="1"/>
</dbReference>
<dbReference type="SMART" id="SM01192">
    <property type="entry name" value="Enolase_C"/>
    <property type="match status" value="1"/>
</dbReference>
<dbReference type="SMART" id="SM01193">
    <property type="entry name" value="Enolase_N"/>
    <property type="match status" value="1"/>
</dbReference>
<dbReference type="SUPFAM" id="SSF51604">
    <property type="entry name" value="Enolase C-terminal domain-like"/>
    <property type="match status" value="1"/>
</dbReference>
<dbReference type="SUPFAM" id="SSF54826">
    <property type="entry name" value="Enolase N-terminal domain-like"/>
    <property type="match status" value="1"/>
</dbReference>
<dbReference type="PROSITE" id="PS00164">
    <property type="entry name" value="ENOLASE"/>
    <property type="match status" value="1"/>
</dbReference>
<organism>
    <name type="scientific">Lactococcus lactis subsp. cremoris (strain SK11)</name>
    <dbReference type="NCBI Taxonomy" id="272622"/>
    <lineage>
        <taxon>Bacteria</taxon>
        <taxon>Bacillati</taxon>
        <taxon>Bacillota</taxon>
        <taxon>Bacilli</taxon>
        <taxon>Lactobacillales</taxon>
        <taxon>Streptococcaceae</taxon>
        <taxon>Lactococcus</taxon>
        <taxon>Lactococcus cremoris subsp. cremoris</taxon>
    </lineage>
</organism>
<reference key="1">
    <citation type="journal article" date="2006" name="Proc. Natl. Acad. Sci. U.S.A.">
        <title>Comparative genomics of the lactic acid bacteria.</title>
        <authorList>
            <person name="Makarova K.S."/>
            <person name="Slesarev A."/>
            <person name="Wolf Y.I."/>
            <person name="Sorokin A."/>
            <person name="Mirkin B."/>
            <person name="Koonin E.V."/>
            <person name="Pavlov A."/>
            <person name="Pavlova N."/>
            <person name="Karamychev V."/>
            <person name="Polouchine N."/>
            <person name="Shakhova V."/>
            <person name="Grigoriev I."/>
            <person name="Lou Y."/>
            <person name="Rohksar D."/>
            <person name="Lucas S."/>
            <person name="Huang K."/>
            <person name="Goodstein D.M."/>
            <person name="Hawkins T."/>
            <person name="Plengvidhya V."/>
            <person name="Welker D."/>
            <person name="Hughes J."/>
            <person name="Goh Y."/>
            <person name="Benson A."/>
            <person name="Baldwin K."/>
            <person name="Lee J.-H."/>
            <person name="Diaz-Muniz I."/>
            <person name="Dosti B."/>
            <person name="Smeianov V."/>
            <person name="Wechter W."/>
            <person name="Barabote R."/>
            <person name="Lorca G."/>
            <person name="Altermann E."/>
            <person name="Barrangou R."/>
            <person name="Ganesan B."/>
            <person name="Xie Y."/>
            <person name="Rawsthorne H."/>
            <person name="Tamir D."/>
            <person name="Parker C."/>
            <person name="Breidt F."/>
            <person name="Broadbent J.R."/>
            <person name="Hutkins R."/>
            <person name="O'Sullivan D."/>
            <person name="Steele J."/>
            <person name="Unlu G."/>
            <person name="Saier M.H. Jr."/>
            <person name="Klaenhammer T."/>
            <person name="Richardson P."/>
            <person name="Kozyavkin S."/>
            <person name="Weimer B.C."/>
            <person name="Mills D.A."/>
        </authorList>
    </citation>
    <scope>NUCLEOTIDE SEQUENCE [LARGE SCALE GENOMIC DNA]</scope>
    <source>
        <strain>SK11</strain>
    </source>
</reference>